<organism>
    <name type="scientific">Mus musculus</name>
    <name type="common">Mouse</name>
    <dbReference type="NCBI Taxonomy" id="10090"/>
    <lineage>
        <taxon>Eukaryota</taxon>
        <taxon>Metazoa</taxon>
        <taxon>Chordata</taxon>
        <taxon>Craniata</taxon>
        <taxon>Vertebrata</taxon>
        <taxon>Euteleostomi</taxon>
        <taxon>Mammalia</taxon>
        <taxon>Eutheria</taxon>
        <taxon>Euarchontoglires</taxon>
        <taxon>Glires</taxon>
        <taxon>Rodentia</taxon>
        <taxon>Myomorpha</taxon>
        <taxon>Muroidea</taxon>
        <taxon>Muridae</taxon>
        <taxon>Murinae</taxon>
        <taxon>Mus</taxon>
        <taxon>Mus</taxon>
    </lineage>
</organism>
<feature type="chain" id="PRO_0000129494" description="Mastermind-like protein 1">
    <location>
        <begin position="1"/>
        <end position="1020"/>
    </location>
</feature>
<feature type="region of interest" description="Required for interaction with NOTCH proteins" evidence="3">
    <location>
        <begin position="1"/>
        <end position="97"/>
    </location>
</feature>
<feature type="region of interest" description="Disordered" evidence="2">
    <location>
        <begin position="67"/>
        <end position="191"/>
    </location>
</feature>
<feature type="region of interest" description="Disordered" evidence="2">
    <location>
        <begin position="335"/>
        <end position="522"/>
    </location>
</feature>
<feature type="region of interest" description="Disordered" evidence="2">
    <location>
        <begin position="575"/>
        <end position="598"/>
    </location>
</feature>
<feature type="region of interest" description="Disordered" evidence="2">
    <location>
        <begin position="663"/>
        <end position="686"/>
    </location>
</feature>
<feature type="region of interest" description="Disordered" evidence="2">
    <location>
        <begin position="725"/>
        <end position="748"/>
    </location>
</feature>
<feature type="region of interest" description="Disordered" evidence="2">
    <location>
        <begin position="794"/>
        <end position="866"/>
    </location>
</feature>
<feature type="region of interest" description="Disordered" evidence="2">
    <location>
        <begin position="888"/>
        <end position="959"/>
    </location>
</feature>
<feature type="compositionally biased region" description="Basic residues" evidence="2">
    <location>
        <begin position="67"/>
        <end position="76"/>
    </location>
</feature>
<feature type="compositionally biased region" description="Low complexity" evidence="2">
    <location>
        <begin position="77"/>
        <end position="99"/>
    </location>
</feature>
<feature type="compositionally biased region" description="Basic and acidic residues" evidence="2">
    <location>
        <begin position="100"/>
        <end position="122"/>
    </location>
</feature>
<feature type="compositionally biased region" description="Polar residues" evidence="2">
    <location>
        <begin position="124"/>
        <end position="133"/>
    </location>
</feature>
<feature type="compositionally biased region" description="Polar residues" evidence="2">
    <location>
        <begin position="344"/>
        <end position="369"/>
    </location>
</feature>
<feature type="compositionally biased region" description="Low complexity" evidence="2">
    <location>
        <begin position="373"/>
        <end position="383"/>
    </location>
</feature>
<feature type="compositionally biased region" description="Polar residues" evidence="2">
    <location>
        <begin position="399"/>
        <end position="410"/>
    </location>
</feature>
<feature type="compositionally biased region" description="Low complexity" evidence="2">
    <location>
        <begin position="419"/>
        <end position="435"/>
    </location>
</feature>
<feature type="compositionally biased region" description="Polar residues" evidence="2">
    <location>
        <begin position="491"/>
        <end position="515"/>
    </location>
</feature>
<feature type="compositionally biased region" description="Low complexity" evidence="2">
    <location>
        <begin position="588"/>
        <end position="598"/>
    </location>
</feature>
<feature type="compositionally biased region" description="Polar residues" evidence="2">
    <location>
        <begin position="794"/>
        <end position="818"/>
    </location>
</feature>
<feature type="compositionally biased region" description="Polar residues" evidence="2">
    <location>
        <begin position="837"/>
        <end position="864"/>
    </location>
</feature>
<feature type="compositionally biased region" description="Low complexity" evidence="2">
    <location>
        <begin position="911"/>
        <end position="920"/>
    </location>
</feature>
<feature type="modified residue" description="Phosphoserine" evidence="1">
    <location>
        <position position="45"/>
    </location>
</feature>
<feature type="modified residue" description="Phosphoserine" evidence="12">
    <location>
        <position position="127"/>
    </location>
</feature>
<feature type="modified residue" description="Phosphoserine" evidence="13">
    <location>
        <position position="310"/>
    </location>
</feature>
<feature type="modified residue" description="Phosphoserine" evidence="13">
    <location>
        <position position="321"/>
    </location>
</feature>
<feature type="modified residue" description="Phosphoserine" evidence="1">
    <location>
        <position position="367"/>
    </location>
</feature>
<feature type="modified residue" description="N6-acetyllysine" evidence="1">
    <location>
        <position position="827"/>
    </location>
</feature>
<feature type="modified residue" description="Phosphoserine" evidence="12">
    <location>
        <position position="1019"/>
    </location>
</feature>
<feature type="sequence conflict" description="In Ref. 4; AAH58658." evidence="6" ref="4">
    <original>M</original>
    <variation>T</variation>
    <location>
        <position position="574"/>
    </location>
</feature>
<feature type="sequence conflict" description="In Ref. 1; AAS07633 and 2; BAC97898." evidence="6" ref="1 2">
    <location>
        <begin position="643"/>
        <end position="646"/>
    </location>
</feature>
<feature type="sequence conflict" description="In Ref. 1; AAS07633." evidence="6" ref="1">
    <original>P</original>
    <variation>S</variation>
    <location>
        <position position="675"/>
    </location>
</feature>
<feature type="sequence conflict" description="In Ref. 5; BAC39618." evidence="6" ref="5">
    <original>A</original>
    <variation>P</variation>
    <location>
        <position position="769"/>
    </location>
</feature>
<feature type="sequence conflict" description="In Ref. 1; AAS07633." evidence="6" ref="1">
    <original>A</original>
    <variation>T</variation>
    <location>
        <position position="769"/>
    </location>
</feature>
<feature type="sequence conflict" description="In Ref. 5; BAC39618." evidence="6" ref="5">
    <original>Q</original>
    <variation>H</variation>
    <location>
        <position position="770"/>
    </location>
</feature>
<feature type="sequence conflict" description="In Ref. 1; AAS07633." evidence="6" ref="1">
    <original>P</original>
    <variation>L</variation>
    <location>
        <position position="822"/>
    </location>
</feature>
<feature type="sequence conflict" description="In Ref. 1; AAS07633." evidence="6" ref="1">
    <original>S</original>
    <variation>C</variation>
    <location>
        <position position="861"/>
    </location>
</feature>
<feature type="sequence conflict" description="In Ref. 5; BAC39618." evidence="6" ref="5">
    <original>N</original>
    <variation>K</variation>
    <location>
        <position position="1003"/>
    </location>
</feature>
<accession>Q6T264</accession>
<accession>Q505D8</accession>
<accession>Q5SUC2</accession>
<accession>Q6PDK3</accession>
<accession>Q6ZQG5</accession>
<accession>Q8BIU5</accession>
<accession>Q8R3T0</accession>
<gene>
    <name evidence="9 11" type="primary">Maml1</name>
    <name evidence="10" type="synonym">Kiaa0200</name>
</gene>
<dbReference type="EMBL" id="AY442299">
    <property type="protein sequence ID" value="AAS07633.1"/>
    <property type="molecule type" value="mRNA"/>
</dbReference>
<dbReference type="EMBL" id="AK129088">
    <property type="protein sequence ID" value="BAC97898.1"/>
    <property type="status" value="ALT_INIT"/>
    <property type="molecule type" value="mRNA"/>
</dbReference>
<dbReference type="EMBL" id="AL646002">
    <property type="status" value="NOT_ANNOTATED_CDS"/>
    <property type="molecule type" value="Genomic_DNA"/>
</dbReference>
<dbReference type="EMBL" id="BC024668">
    <property type="protein sequence ID" value="AAH24668.1"/>
    <property type="molecule type" value="mRNA"/>
</dbReference>
<dbReference type="EMBL" id="BC058658">
    <property type="protein sequence ID" value="AAH58658.1"/>
    <property type="molecule type" value="mRNA"/>
</dbReference>
<dbReference type="EMBL" id="BC094599">
    <property type="protein sequence ID" value="AAH94599.2"/>
    <property type="status" value="ALT_INIT"/>
    <property type="molecule type" value="mRNA"/>
</dbReference>
<dbReference type="EMBL" id="AK086146">
    <property type="protein sequence ID" value="BAC39618.1"/>
    <property type="status" value="ALT_INIT"/>
    <property type="molecule type" value="mRNA"/>
</dbReference>
<dbReference type="CCDS" id="CCDS24632.2"/>
<dbReference type="RefSeq" id="NP_780543.2">
    <property type="nucleotide sequence ID" value="NM_175334.3"/>
</dbReference>
<dbReference type="SMR" id="Q6T264"/>
<dbReference type="BioGRID" id="222170">
    <property type="interactions" value="5"/>
</dbReference>
<dbReference type="CORUM" id="Q6T264"/>
<dbReference type="FunCoup" id="Q6T264">
    <property type="interactions" value="2927"/>
</dbReference>
<dbReference type="IntAct" id="Q6T264">
    <property type="interactions" value="6"/>
</dbReference>
<dbReference type="MINT" id="Q6T264"/>
<dbReference type="STRING" id="10090.ENSMUSP00000059210"/>
<dbReference type="iPTMnet" id="Q6T264"/>
<dbReference type="PhosphoSitePlus" id="Q6T264"/>
<dbReference type="jPOST" id="Q6T264"/>
<dbReference type="PaxDb" id="10090-ENSMUSP00000059210"/>
<dbReference type="ProteomicsDB" id="292014"/>
<dbReference type="Pumba" id="Q6T264"/>
<dbReference type="Antibodypedia" id="29514">
    <property type="antibodies" value="235 antibodies from 34 providers"/>
</dbReference>
<dbReference type="DNASU" id="103806"/>
<dbReference type="Ensembl" id="ENSMUST00000059458.5">
    <property type="protein sequence ID" value="ENSMUSP00000059210.5"/>
    <property type="gene ID" value="ENSMUSG00000050567.17"/>
</dbReference>
<dbReference type="GeneID" id="103806"/>
<dbReference type="KEGG" id="mmu:103806"/>
<dbReference type="UCSC" id="uc007isd.2">
    <property type="organism name" value="mouse"/>
</dbReference>
<dbReference type="AGR" id="MGI:1890504"/>
<dbReference type="CTD" id="9794"/>
<dbReference type="MGI" id="MGI:1890504">
    <property type="gene designation" value="Maml1"/>
</dbReference>
<dbReference type="VEuPathDB" id="HostDB:ENSMUSG00000050567"/>
<dbReference type="eggNOG" id="ENOG502QSU1">
    <property type="taxonomic scope" value="Eukaryota"/>
</dbReference>
<dbReference type="GeneTree" id="ENSGT00950000183201"/>
<dbReference type="HOGENOM" id="CLU_008569_1_0_1"/>
<dbReference type="InParanoid" id="Q6T264"/>
<dbReference type="OMA" id="PCMITGT"/>
<dbReference type="OrthoDB" id="5982619at2759"/>
<dbReference type="PhylomeDB" id="Q6T264"/>
<dbReference type="TreeFam" id="TF332922"/>
<dbReference type="Reactome" id="R-MMU-2122947">
    <property type="pathway name" value="NOTCH1 Intracellular Domain Regulates Transcription"/>
</dbReference>
<dbReference type="Reactome" id="R-MMU-350054">
    <property type="pathway name" value="Notch-HLH transcription pathway"/>
</dbReference>
<dbReference type="Reactome" id="R-MMU-8941856">
    <property type="pathway name" value="RUNX3 regulates NOTCH signaling"/>
</dbReference>
<dbReference type="BioGRID-ORCS" id="103806">
    <property type="hits" value="2 hits in 77 CRISPR screens"/>
</dbReference>
<dbReference type="ChiTaRS" id="Maml1">
    <property type="organism name" value="mouse"/>
</dbReference>
<dbReference type="PRO" id="PR:Q6T264"/>
<dbReference type="Proteomes" id="UP000000589">
    <property type="component" value="Chromosome 11"/>
</dbReference>
<dbReference type="RNAct" id="Q6T264">
    <property type="molecule type" value="protein"/>
</dbReference>
<dbReference type="Bgee" id="ENSMUSG00000050567">
    <property type="expression patterns" value="Expressed in left lung lobe and 231 other cell types or tissues"/>
</dbReference>
<dbReference type="ExpressionAtlas" id="Q6T264">
    <property type="expression patterns" value="baseline and differential"/>
</dbReference>
<dbReference type="GO" id="GO:0002193">
    <property type="term" value="C:MAML1-RBP-Jkappa- ICN1 complex"/>
    <property type="evidence" value="ECO:0007669"/>
    <property type="project" value="Ensembl"/>
</dbReference>
<dbReference type="GO" id="GO:0016607">
    <property type="term" value="C:nuclear speck"/>
    <property type="evidence" value="ECO:0007669"/>
    <property type="project" value="UniProtKB-SubCell"/>
</dbReference>
<dbReference type="GO" id="GO:0005654">
    <property type="term" value="C:nucleoplasm"/>
    <property type="evidence" value="ECO:0000304"/>
    <property type="project" value="Reactome"/>
</dbReference>
<dbReference type="GO" id="GO:0005634">
    <property type="term" value="C:nucleus"/>
    <property type="evidence" value="ECO:0000314"/>
    <property type="project" value="MGI"/>
</dbReference>
<dbReference type="GO" id="GO:0042605">
    <property type="term" value="F:peptide antigen binding"/>
    <property type="evidence" value="ECO:0007669"/>
    <property type="project" value="Ensembl"/>
</dbReference>
<dbReference type="GO" id="GO:0019901">
    <property type="term" value="F:protein kinase binding"/>
    <property type="evidence" value="ECO:0007669"/>
    <property type="project" value="Ensembl"/>
</dbReference>
<dbReference type="GO" id="GO:0003713">
    <property type="term" value="F:transcription coactivator activity"/>
    <property type="evidence" value="ECO:0000314"/>
    <property type="project" value="MGI"/>
</dbReference>
<dbReference type="GO" id="GO:0060928">
    <property type="term" value="P:atrioventricular node cell development"/>
    <property type="evidence" value="ECO:0000315"/>
    <property type="project" value="BHF-UCL"/>
</dbReference>
<dbReference type="GO" id="GO:0045445">
    <property type="term" value="P:myoblast differentiation"/>
    <property type="evidence" value="ECO:0000270"/>
    <property type="project" value="UniProtKB"/>
</dbReference>
<dbReference type="GO" id="GO:0007219">
    <property type="term" value="P:Notch signaling pathway"/>
    <property type="evidence" value="ECO:0000314"/>
    <property type="project" value="UniProtKB"/>
</dbReference>
<dbReference type="GO" id="GO:0051149">
    <property type="term" value="P:positive regulation of muscle cell differentiation"/>
    <property type="evidence" value="ECO:0000315"/>
    <property type="project" value="UniProtKB"/>
</dbReference>
<dbReference type="GO" id="GO:0010831">
    <property type="term" value="P:positive regulation of myotube differentiation"/>
    <property type="evidence" value="ECO:0000316"/>
    <property type="project" value="UniProtKB"/>
</dbReference>
<dbReference type="GO" id="GO:0045944">
    <property type="term" value="P:positive regulation of transcription by RNA polymerase II"/>
    <property type="evidence" value="ECO:0000314"/>
    <property type="project" value="UniProtKB"/>
</dbReference>
<dbReference type="GO" id="GO:0007221">
    <property type="term" value="P:positive regulation of transcription of Notch receptor target"/>
    <property type="evidence" value="ECO:0000316"/>
    <property type="project" value="MGI"/>
</dbReference>
<dbReference type="Gene3D" id="6.10.250.970">
    <property type="match status" value="1"/>
</dbReference>
<dbReference type="InterPro" id="IPR046369">
    <property type="entry name" value="MAML1-3"/>
</dbReference>
<dbReference type="InterPro" id="IPR048456">
    <property type="entry name" value="MAML1_3_TAD1"/>
</dbReference>
<dbReference type="InterPro" id="IPR048455">
    <property type="entry name" value="MAML1_3_TAD2"/>
</dbReference>
<dbReference type="InterPro" id="IPR046370">
    <property type="entry name" value="MAML_N_sf"/>
</dbReference>
<dbReference type="InterPro" id="IPR019082">
    <property type="entry name" value="Mastermind-like_N"/>
</dbReference>
<dbReference type="PANTHER" id="PTHR15692">
    <property type="entry name" value="MASTERMIND-LIKE"/>
    <property type="match status" value="1"/>
</dbReference>
<dbReference type="PANTHER" id="PTHR15692:SF19">
    <property type="entry name" value="MASTERMIND-LIKE PROTEIN 1"/>
    <property type="match status" value="1"/>
</dbReference>
<dbReference type="Pfam" id="PF09596">
    <property type="entry name" value="MamL-1"/>
    <property type="match status" value="1"/>
</dbReference>
<dbReference type="Pfam" id="PF20802">
    <property type="entry name" value="MAML1_3_TAD1"/>
    <property type="match status" value="1"/>
</dbReference>
<dbReference type="Pfam" id="PF20801">
    <property type="entry name" value="MAML1_3_TAD2"/>
    <property type="match status" value="1"/>
</dbReference>
<dbReference type="SMART" id="SM01275">
    <property type="entry name" value="MamL-1"/>
    <property type="match status" value="1"/>
</dbReference>
<protein>
    <recommendedName>
        <fullName>Mastermind-like protein 1</fullName>
        <shortName>Mam-1</shortName>
    </recommendedName>
</protein>
<name>MAML1_MOUSE</name>
<keyword id="KW-0007">Acetylation</keyword>
<keyword id="KW-0010">Activator</keyword>
<keyword id="KW-0914">Notch signaling pathway</keyword>
<keyword id="KW-0539">Nucleus</keyword>
<keyword id="KW-0597">Phosphoprotein</keyword>
<keyword id="KW-1185">Reference proteome</keyword>
<keyword id="KW-0804">Transcription</keyword>
<keyword id="KW-0805">Transcription regulation</keyword>
<sequence>MVLPTCPMAEFALPRHSAVMERLRRRIELCRRHHSTCEARYEAVSPERLELERQHTFALHQRCIQAKAKRAGKHRQPPAAATAPVAAPAPASAPAAARLDAADGPEHGRPVAHLHDTVKRSLDSAASPQNGDQPNGYGDLFPGHKKTRREAPLGVSVSANGLPPASPLGQPDKPSGGDTLQTAGKHSLGLDPINKKCLADSGIHLNGGSNSSEPFPLSLSKELKQEPVDDLPCMIAGAGGSVAQSNLMPDLNLNEQEWKELIEELNRSVPDEDMKDLFTEDFEEKKDPEPPGSATQTPLAQDINIKTEFSPAAFEQEQLGSPQVRAGSAGQTFLGASSAPVGTDSPSLGSSQTLFHTTSQPGVDNSSPNLMPASAQAQSAQRALTSVVLPSQGPGGASELSSAHQLQQIAAKQKREQMLQNPQQAAPAPGPGQLATWQQAGPSHSPLDVPYPMEKPASPSGYKQDFTNSKLLMMPGVNKSSPRPGGPYLQPSHSNLLSHQSPSNLNQNPVNNQGSVLDYGNTKPLSHYKADCGQGGPGSGQNKPALMAYLPQQLPHLSNEQNSLFLMKPKSGNMPFRSLVPPGQEQNPSSVPVAAPAASVGTQPTVSVASTHNSSPYLSSQQQAAVMKQHQLLLDQQKQREQQQQQLQQQQFLQRQHLLAEQEKQQFQRHLTRPPPQYQDPTQSTFPQQVGQFTGPSAAVPGMNNLGPSNSSCPRVFPQPGTLMSMGPGHAPVSSLPSSSGQQDRGVAQFTGSQSLPQNSLYGMASGLAQIVAQPPPQATSTHAHIPRQTNVGQNASTSAAYGQNSLGSASLSQQHSKGTLPPGLTKPQVPRVSAAMGSQNASWQHQGMPNLSSQTSGNSSVNPFTAAPSFHIQQAHLKLAGQQFSQAMPSRPMAPLSSAGAAGPMLPPVSAQQRNSAPASAPPQAAPQQGLPGLSPSGPELGAFGQSPTSQMSGRPGLHCAQAYPVRTMGQELPFAYSGQPGSSGLSSVAGHTDLIDSLLKNRTSEEWINELDDLLGSQ</sequence>
<comment type="function">
    <text evidence="3 4">Acts as a transcriptional coactivator for NOTCH proteins. Has been shown to amplify NOTCH-induced transcription of HES1. Enhances phosphorylation and proteolytic turnover of the NOTCH intracellular domain in the nucleus through interaction with CDK8. Binds to CREBBP/CBP which promotes nucleosome acetylation at NOTCH enhancers and activates transcription. Induces phosphorylation and localization of CREBBP to nuclear foci. Plays a role in hematopoietic development by regulating NOTCH-mediated lymphoid cell fate decisions.</text>
</comment>
<comment type="subunit">
    <text evidence="3 5">Interacts (via N-terminus) with NOTCH1, NOTCH2, NOTCH3 and NOTCH4 (via ankyrin repeat region). Interacts (via N-terminus) with p53 (via DNA-binding region). Forms a DNA-binding complex with Notch proteins and RBPSUH/RBP-J kappa/CBF1. Also binds CREBBP/CBP and CDK8. Forms a complex with PRAG1, NOTCH1 and MAML1, in a MAML1-dependent manner (PubMed:25038227).</text>
</comment>
<comment type="subcellular location">
    <subcellularLocation>
        <location evidence="3">Nucleus speckle</location>
    </subcellularLocation>
    <text>Nuclear, in a punctate manner.</text>
</comment>
<comment type="tissue specificity">
    <text evidence="3">At E9.5, strongly expressed in the telencephalon, first branchial arch, forelimb buds and somites. By 10.5 dpc, continuously expressed in brain and spinal cord. Also expressed in first and second branchial arches and limb buds. By 11.5 dpc, expression in CNS is weak but increases in mesodermal tissues. At 14.5 dpc, detected in epithelial cells in trachea, esophagus and proximal and distal tubules of the developing lungs.</text>
</comment>
<comment type="domain">
    <text evidence="3">The C-terminal region is required for transcriptional activation.</text>
</comment>
<comment type="similarity">
    <text evidence="6">Belongs to the mastermind family.</text>
</comment>
<comment type="sequence caution" evidence="6">
    <conflict type="erroneous initiation">
        <sequence resource="EMBL-CDS" id="AAH94599"/>
    </conflict>
</comment>
<comment type="sequence caution" evidence="6">
    <conflict type="erroneous initiation">
        <sequence resource="EMBL-CDS" id="BAC39618"/>
    </conflict>
</comment>
<comment type="sequence caution" evidence="6">
    <conflict type="erroneous initiation">
        <sequence resource="EMBL-CDS" id="BAC97898"/>
    </conflict>
</comment>
<evidence type="ECO:0000250" key="1">
    <source>
        <dbReference type="UniProtKB" id="Q92585"/>
    </source>
</evidence>
<evidence type="ECO:0000256" key="2">
    <source>
        <dbReference type="SAM" id="MobiDB-lite"/>
    </source>
</evidence>
<evidence type="ECO:0000269" key="3">
    <source>
    </source>
</evidence>
<evidence type="ECO:0000269" key="4">
    <source>
    </source>
</evidence>
<evidence type="ECO:0000269" key="5">
    <source>
    </source>
</evidence>
<evidence type="ECO:0000305" key="6"/>
<evidence type="ECO:0000312" key="7">
    <source>
        <dbReference type="EMBL" id="AAH24668.1"/>
    </source>
</evidence>
<evidence type="ECO:0000312" key="8">
    <source>
        <dbReference type="EMBL" id="AAH58658.1"/>
    </source>
</evidence>
<evidence type="ECO:0000312" key="9">
    <source>
        <dbReference type="EMBL" id="AAS07633.1"/>
    </source>
</evidence>
<evidence type="ECO:0000312" key="10">
    <source>
        <dbReference type="EMBL" id="BAC97898.1"/>
    </source>
</evidence>
<evidence type="ECO:0000312" key="11">
    <source>
        <dbReference type="MGI" id="MGI:1890504"/>
    </source>
</evidence>
<evidence type="ECO:0007744" key="12">
    <source>
    </source>
</evidence>
<evidence type="ECO:0007744" key="13">
    <source>
    </source>
</evidence>
<proteinExistence type="evidence at protein level"/>
<reference evidence="6 9" key="1">
    <citation type="journal article" date="2004" name="Gene">
        <title>Cloning and functional characterization of the murine mastermind-like 1 (Maml1) gene.</title>
        <authorList>
            <person name="Wu L."/>
            <person name="Kobayashi K."/>
            <person name="Sun T."/>
            <person name="Gao P."/>
            <person name="Liu J."/>
            <person name="Nakamura M."/>
            <person name="Weisberg E."/>
            <person name="Mukhopadhyay N.K."/>
            <person name="Griffin J.D."/>
        </authorList>
    </citation>
    <scope>NUCLEOTIDE SEQUENCE [MRNA]</scope>
    <scope>FUNCTION</scope>
    <scope>SUBCELLULAR LOCATION</scope>
    <scope>TISSUE SPECIFICITY</scope>
    <scope>INTERACTION WITH NOTCH1; NOTCH2; NOTCH3 AND NOTCH4</scope>
    <source>
        <strain evidence="9">BALB/cJ</strain>
    </source>
</reference>
<reference evidence="10" key="2">
    <citation type="journal article" date="2003" name="DNA Res.">
        <title>Prediction of the coding sequences of mouse homologues of KIAA gene: III. The complete nucleotide sequences of 500 mouse KIAA-homologous cDNAs identified by screening of terminal sequences of cDNA clones randomly sampled from size-fractionated libraries.</title>
        <authorList>
            <person name="Okazaki N."/>
            <person name="Kikuno R."/>
            <person name="Ohara R."/>
            <person name="Inamoto S."/>
            <person name="Koseki H."/>
            <person name="Hiraoka S."/>
            <person name="Saga Y."/>
            <person name="Nagase T."/>
            <person name="Ohara O."/>
            <person name="Koga H."/>
        </authorList>
    </citation>
    <scope>NUCLEOTIDE SEQUENCE [LARGE SCALE MRNA]</scope>
    <source>
        <tissue evidence="10">Embryonic tail</tissue>
    </source>
</reference>
<reference key="3">
    <citation type="journal article" date="2009" name="PLoS Biol.">
        <title>Lineage-specific biology revealed by a finished genome assembly of the mouse.</title>
        <authorList>
            <person name="Church D.M."/>
            <person name="Goodstadt L."/>
            <person name="Hillier L.W."/>
            <person name="Zody M.C."/>
            <person name="Goldstein S."/>
            <person name="She X."/>
            <person name="Bult C.J."/>
            <person name="Agarwala R."/>
            <person name="Cherry J.L."/>
            <person name="DiCuccio M."/>
            <person name="Hlavina W."/>
            <person name="Kapustin Y."/>
            <person name="Meric P."/>
            <person name="Maglott D."/>
            <person name="Birtle Z."/>
            <person name="Marques A.C."/>
            <person name="Graves T."/>
            <person name="Zhou S."/>
            <person name="Teague B."/>
            <person name="Potamousis K."/>
            <person name="Churas C."/>
            <person name="Place M."/>
            <person name="Herschleb J."/>
            <person name="Runnheim R."/>
            <person name="Forrest D."/>
            <person name="Amos-Landgraf J."/>
            <person name="Schwartz D.C."/>
            <person name="Cheng Z."/>
            <person name="Lindblad-Toh K."/>
            <person name="Eichler E.E."/>
            <person name="Ponting C.P."/>
        </authorList>
    </citation>
    <scope>NUCLEOTIDE SEQUENCE [LARGE SCALE GENOMIC DNA]</scope>
    <source>
        <strain>C57BL/6J</strain>
    </source>
</reference>
<reference evidence="6 7" key="4">
    <citation type="journal article" date="2004" name="Genome Res.">
        <title>The status, quality, and expansion of the NIH full-length cDNA project: the Mammalian Gene Collection (MGC).</title>
        <authorList>
            <consortium name="The MGC Project Team"/>
        </authorList>
    </citation>
    <scope>NUCLEOTIDE SEQUENCE [LARGE SCALE MRNA] OF 130-1020</scope>
    <source>
        <strain evidence="8">C57BL/6J</strain>
        <strain evidence="7">FVB/N</strain>
        <tissue evidence="8">Brain</tissue>
        <tissue evidence="7">Mammary gland</tissue>
    </source>
</reference>
<reference key="5">
    <citation type="journal article" date="2005" name="Science">
        <title>The transcriptional landscape of the mammalian genome.</title>
        <authorList>
            <person name="Carninci P."/>
            <person name="Kasukawa T."/>
            <person name="Katayama S."/>
            <person name="Gough J."/>
            <person name="Frith M.C."/>
            <person name="Maeda N."/>
            <person name="Oyama R."/>
            <person name="Ravasi T."/>
            <person name="Lenhard B."/>
            <person name="Wells C."/>
            <person name="Kodzius R."/>
            <person name="Shimokawa K."/>
            <person name="Bajic V.B."/>
            <person name="Brenner S.E."/>
            <person name="Batalov S."/>
            <person name="Forrest A.R."/>
            <person name="Zavolan M."/>
            <person name="Davis M.J."/>
            <person name="Wilming L.G."/>
            <person name="Aidinis V."/>
            <person name="Allen J.E."/>
            <person name="Ambesi-Impiombato A."/>
            <person name="Apweiler R."/>
            <person name="Aturaliya R.N."/>
            <person name="Bailey T.L."/>
            <person name="Bansal M."/>
            <person name="Baxter L."/>
            <person name="Beisel K.W."/>
            <person name="Bersano T."/>
            <person name="Bono H."/>
            <person name="Chalk A.M."/>
            <person name="Chiu K.P."/>
            <person name="Choudhary V."/>
            <person name="Christoffels A."/>
            <person name="Clutterbuck D.R."/>
            <person name="Crowe M.L."/>
            <person name="Dalla E."/>
            <person name="Dalrymple B.P."/>
            <person name="de Bono B."/>
            <person name="Della Gatta G."/>
            <person name="di Bernardo D."/>
            <person name="Down T."/>
            <person name="Engstrom P."/>
            <person name="Fagiolini M."/>
            <person name="Faulkner G."/>
            <person name="Fletcher C.F."/>
            <person name="Fukushima T."/>
            <person name="Furuno M."/>
            <person name="Futaki S."/>
            <person name="Gariboldi M."/>
            <person name="Georgii-Hemming P."/>
            <person name="Gingeras T.R."/>
            <person name="Gojobori T."/>
            <person name="Green R.E."/>
            <person name="Gustincich S."/>
            <person name="Harbers M."/>
            <person name="Hayashi Y."/>
            <person name="Hensch T.K."/>
            <person name="Hirokawa N."/>
            <person name="Hill D."/>
            <person name="Huminiecki L."/>
            <person name="Iacono M."/>
            <person name="Ikeo K."/>
            <person name="Iwama A."/>
            <person name="Ishikawa T."/>
            <person name="Jakt M."/>
            <person name="Kanapin A."/>
            <person name="Katoh M."/>
            <person name="Kawasawa Y."/>
            <person name="Kelso J."/>
            <person name="Kitamura H."/>
            <person name="Kitano H."/>
            <person name="Kollias G."/>
            <person name="Krishnan S.P."/>
            <person name="Kruger A."/>
            <person name="Kummerfeld S.K."/>
            <person name="Kurochkin I.V."/>
            <person name="Lareau L.F."/>
            <person name="Lazarevic D."/>
            <person name="Lipovich L."/>
            <person name="Liu J."/>
            <person name="Liuni S."/>
            <person name="McWilliam S."/>
            <person name="Madan Babu M."/>
            <person name="Madera M."/>
            <person name="Marchionni L."/>
            <person name="Matsuda H."/>
            <person name="Matsuzawa S."/>
            <person name="Miki H."/>
            <person name="Mignone F."/>
            <person name="Miyake S."/>
            <person name="Morris K."/>
            <person name="Mottagui-Tabar S."/>
            <person name="Mulder N."/>
            <person name="Nakano N."/>
            <person name="Nakauchi H."/>
            <person name="Ng P."/>
            <person name="Nilsson R."/>
            <person name="Nishiguchi S."/>
            <person name="Nishikawa S."/>
            <person name="Nori F."/>
            <person name="Ohara O."/>
            <person name="Okazaki Y."/>
            <person name="Orlando V."/>
            <person name="Pang K.C."/>
            <person name="Pavan W.J."/>
            <person name="Pavesi G."/>
            <person name="Pesole G."/>
            <person name="Petrovsky N."/>
            <person name="Piazza S."/>
            <person name="Reed J."/>
            <person name="Reid J.F."/>
            <person name="Ring B.Z."/>
            <person name="Ringwald M."/>
            <person name="Rost B."/>
            <person name="Ruan Y."/>
            <person name="Salzberg S.L."/>
            <person name="Sandelin A."/>
            <person name="Schneider C."/>
            <person name="Schoenbach C."/>
            <person name="Sekiguchi K."/>
            <person name="Semple C.A."/>
            <person name="Seno S."/>
            <person name="Sessa L."/>
            <person name="Sheng Y."/>
            <person name="Shibata Y."/>
            <person name="Shimada H."/>
            <person name="Shimada K."/>
            <person name="Silva D."/>
            <person name="Sinclair B."/>
            <person name="Sperling S."/>
            <person name="Stupka E."/>
            <person name="Sugiura K."/>
            <person name="Sultana R."/>
            <person name="Takenaka Y."/>
            <person name="Taki K."/>
            <person name="Tammoja K."/>
            <person name="Tan S.L."/>
            <person name="Tang S."/>
            <person name="Taylor M.S."/>
            <person name="Tegner J."/>
            <person name="Teichmann S.A."/>
            <person name="Ueda H.R."/>
            <person name="van Nimwegen E."/>
            <person name="Verardo R."/>
            <person name="Wei C.L."/>
            <person name="Yagi K."/>
            <person name="Yamanishi H."/>
            <person name="Zabarovsky E."/>
            <person name="Zhu S."/>
            <person name="Zimmer A."/>
            <person name="Hide W."/>
            <person name="Bult C."/>
            <person name="Grimmond S.M."/>
            <person name="Teasdale R.D."/>
            <person name="Liu E.T."/>
            <person name="Brusic V."/>
            <person name="Quackenbush J."/>
            <person name="Wahlestedt C."/>
            <person name="Mattick J.S."/>
            <person name="Hume D.A."/>
            <person name="Kai C."/>
            <person name="Sasaki D."/>
            <person name="Tomaru Y."/>
            <person name="Fukuda S."/>
            <person name="Kanamori-Katayama M."/>
            <person name="Suzuki M."/>
            <person name="Aoki J."/>
            <person name="Arakawa T."/>
            <person name="Iida J."/>
            <person name="Imamura K."/>
            <person name="Itoh M."/>
            <person name="Kato T."/>
            <person name="Kawaji H."/>
            <person name="Kawagashira N."/>
            <person name="Kawashima T."/>
            <person name="Kojima M."/>
            <person name="Kondo S."/>
            <person name="Konno H."/>
            <person name="Nakano K."/>
            <person name="Ninomiya N."/>
            <person name="Nishio T."/>
            <person name="Okada M."/>
            <person name="Plessy C."/>
            <person name="Shibata K."/>
            <person name="Shiraki T."/>
            <person name="Suzuki S."/>
            <person name="Tagami M."/>
            <person name="Waki K."/>
            <person name="Watahiki A."/>
            <person name="Okamura-Oho Y."/>
            <person name="Suzuki H."/>
            <person name="Kawai J."/>
            <person name="Hayashizaki Y."/>
        </authorList>
    </citation>
    <scope>NUCLEOTIDE SEQUENCE [LARGE SCALE MRNA] OF 161-1020</scope>
    <source>
        <strain>C57BL/6J</strain>
        <tissue>Head</tissue>
    </source>
</reference>
<reference key="6">
    <citation type="journal article" date="2004" name="Blood">
        <title>Mastermind critically regulates Notch-mediated lymphoid cell fate decisions.</title>
        <authorList>
            <person name="Maillard I."/>
            <person name="Weng A.P."/>
            <person name="Carpenter A.C."/>
            <person name="Rodriguez C.G."/>
            <person name="Sai H."/>
            <person name="Xu L."/>
            <person name="Allman D."/>
            <person name="Aster J.C."/>
            <person name="Pear W.S."/>
        </authorList>
    </citation>
    <scope>FUNCTION</scope>
</reference>
<reference key="7">
    <citation type="journal article" date="2009" name="Immunity">
        <title>The phagosomal proteome in interferon-gamma-activated macrophages.</title>
        <authorList>
            <person name="Trost M."/>
            <person name="English L."/>
            <person name="Lemieux S."/>
            <person name="Courcelles M."/>
            <person name="Desjardins M."/>
            <person name="Thibault P."/>
        </authorList>
    </citation>
    <scope>PHOSPHORYLATION [LARGE SCALE ANALYSIS] AT SER-127 AND SER-1019</scope>
    <scope>IDENTIFICATION BY MASS SPECTROMETRY [LARGE SCALE ANALYSIS]</scope>
</reference>
<reference key="8">
    <citation type="journal article" date="2010" name="Cell">
        <title>A tissue-specific atlas of mouse protein phosphorylation and expression.</title>
        <authorList>
            <person name="Huttlin E.L."/>
            <person name="Jedrychowski M.P."/>
            <person name="Elias J.E."/>
            <person name="Goswami T."/>
            <person name="Rad R."/>
            <person name="Beausoleil S.A."/>
            <person name="Villen J."/>
            <person name="Haas W."/>
            <person name="Sowa M.E."/>
            <person name="Gygi S.P."/>
        </authorList>
    </citation>
    <scope>PHOSPHORYLATION [LARGE SCALE ANALYSIS] AT SER-310 AND SER-321</scope>
    <scope>IDENTIFICATION BY MASS SPECTROMETRY [LARGE SCALE ANALYSIS]</scope>
    <source>
        <tissue>Kidney</tissue>
        <tissue>Lung</tissue>
        <tissue>Spleen</tissue>
    </source>
</reference>
<reference key="9">
    <citation type="journal article" date="2014" name="Cancer Res.">
        <title>NACK is an integral component of the Notch transcriptional activation complex and is critical for development and tumorigenesis.</title>
        <authorList>
            <person name="Weaver K.L."/>
            <person name="Alves-Guerra M.C."/>
            <person name="Jin K."/>
            <person name="Wang Z."/>
            <person name="Han X."/>
            <person name="Ranganathan P."/>
            <person name="Zhu X."/>
            <person name="DaSilva T."/>
            <person name="Liu W."/>
            <person name="Ratti F."/>
            <person name="Demarest R.M."/>
            <person name="Tzimas C."/>
            <person name="Rice M."/>
            <person name="Vasquez-Del Carpio R."/>
            <person name="Dahmane N."/>
            <person name="Robbins D.J."/>
            <person name="Capobianco A.J."/>
        </authorList>
    </citation>
    <scope>INTERACTION WITH NOTCH1 AND MAML1</scope>
</reference>